<sequence>MGNRHAKAKSHHGFDVDHDAKKLNKACKGMGTDEAAIIEILSSRTSDERQQIKQKYKATYGKDLEEVFKSDLSGNFEKTALALLDRPSEYDARQLQKAMKGLGTDEAVLIEILCTRTNKEIMAIKEAYQRLFDRSLESDVKADTSGNLKAILVSLLQANRDEGDDVDKDLAGQDAKDLYDAGDGRWGTDELAFNEVLAKRSHKQLRATFQAYQILIDKDIEEAIEAETSGDLQKAYLTLVRCARDQEGYFADRLYKSMKGTGTDEETLIHIIVTRAEVDLQGIKAKFQEKYQKSLSDMVRSDTSGDFQKLLVALLH</sequence>
<keyword id="KW-0025">Alternative splicing</keyword>
<keyword id="KW-0041">Annexin</keyword>
<keyword id="KW-0106">Calcium</keyword>
<keyword id="KW-0111">Calcium/phospholipid-binding</keyword>
<keyword id="KW-1003">Cell membrane</keyword>
<keyword id="KW-0968">Cytoplasmic vesicle</keyword>
<keyword id="KW-0903">Direct protein sequencing</keyword>
<keyword id="KW-0449">Lipoprotein</keyword>
<keyword id="KW-0472">Membrane</keyword>
<keyword id="KW-0519">Myristate</keyword>
<keyword id="KW-1185">Reference proteome</keyword>
<keyword id="KW-0677">Repeat</keyword>
<proteinExistence type="evidence at protein level"/>
<organism>
    <name type="scientific">Canis lupus familiaris</name>
    <name type="common">Dog</name>
    <name type="synonym">Canis familiaris</name>
    <dbReference type="NCBI Taxonomy" id="9615"/>
    <lineage>
        <taxon>Eukaryota</taxon>
        <taxon>Metazoa</taxon>
        <taxon>Chordata</taxon>
        <taxon>Craniata</taxon>
        <taxon>Vertebrata</taxon>
        <taxon>Euteleostomi</taxon>
        <taxon>Mammalia</taxon>
        <taxon>Eutheria</taxon>
        <taxon>Laurasiatheria</taxon>
        <taxon>Carnivora</taxon>
        <taxon>Caniformia</taxon>
        <taxon>Canidae</taxon>
        <taxon>Canis</taxon>
    </lineage>
</organism>
<gene>
    <name type="primary">ANXA13</name>
    <name type="synonym">ANX13</name>
</gene>
<feature type="initiator methionine" description="Removed" evidence="1">
    <location>
        <position position="1"/>
    </location>
</feature>
<feature type="chain" id="PRO_0000067513" description="Annexin A13">
    <location>
        <begin position="2"/>
        <end position="316"/>
    </location>
</feature>
<feature type="repeat" description="Annexin 1" evidence="3">
    <location>
        <begin position="14"/>
        <end position="85"/>
    </location>
</feature>
<feature type="repeat" description="Annexin 2" evidence="3">
    <location>
        <begin position="86"/>
        <end position="157"/>
    </location>
</feature>
<feature type="repeat" description="Annexin 3" evidence="3">
    <location>
        <begin position="169"/>
        <end position="241"/>
    </location>
</feature>
<feature type="repeat" description="Annexin 4" evidence="3">
    <location>
        <begin position="245"/>
        <end position="316"/>
    </location>
</feature>
<feature type="lipid moiety-binding region" description="N-myristoyl glycine" evidence="1">
    <location>
        <position position="2"/>
    </location>
</feature>
<feature type="splice variant" id="VSP_000290" description="In isoform B." evidence="5">
    <original>H</original>
    <variation>HSQSYSLSEGSQQLPKGDIQPSAAVQPLSHPSGSGEPEAQQP</variation>
    <location>
        <position position="5"/>
    </location>
</feature>
<accession>Q29471</accession>
<accession>Q29472</accession>
<protein>
    <recommendedName>
        <fullName>Annexin A13</fullName>
    </recommendedName>
    <alternativeName>
        <fullName evidence="5">Annexin XIII</fullName>
    </alternativeName>
    <alternativeName>
        <fullName>Annexin-13</fullName>
    </alternativeName>
    <alternativeName>
        <fullName>Intestine-specific annexin</fullName>
        <shortName>ISA</shortName>
    </alternativeName>
</protein>
<evidence type="ECO:0000250" key="1">
    <source>
        <dbReference type="UniProtKB" id="P27216"/>
    </source>
</evidence>
<evidence type="ECO:0000250" key="2">
    <source>
        <dbReference type="UniProtKB" id="Q99JG3"/>
    </source>
</evidence>
<evidence type="ECO:0000255" key="3">
    <source>
        <dbReference type="PROSITE-ProRule" id="PRU01245"/>
    </source>
</evidence>
<evidence type="ECO:0000269" key="4">
    <source>
    </source>
</evidence>
<evidence type="ECO:0000303" key="5">
    <source>
    </source>
</evidence>
<evidence type="ECO:0000305" key="6"/>
<evidence type="ECO:0000305" key="7">
    <source>
    </source>
</evidence>
<reference key="1">
    <citation type="journal article" date="1995" name="J. Cell Biol.">
        <title>Annexin XIIIb: a novel epithelial specific annexin is implicated in vesicular traffic to the apical plasma membrane.</title>
        <authorList>
            <person name="Fiedler K."/>
            <person name="Lafont F."/>
            <person name="Parton R.G."/>
            <person name="Simons K."/>
        </authorList>
    </citation>
    <scope>NUCLEOTIDE SEQUENCE [MRNA] (ISOFORMS A AND B)</scope>
    <scope>PROTEIN SEQUENCE OF 150-160; 186-199 AND 310-316</scope>
    <scope>SUBCELLULAR LOCATION</scope>
    <scope>TISSUE SPECIFICITY</scope>
    <source>
        <strain>Cocker spaniel</strain>
        <tissue>Kidney</tissue>
    </source>
</reference>
<dbReference type="EMBL" id="X80208">
    <property type="protein sequence ID" value="CAA56506.1"/>
    <property type="molecule type" value="mRNA"/>
</dbReference>
<dbReference type="EMBL" id="X80209">
    <property type="protein sequence ID" value="CAA56507.1"/>
    <property type="molecule type" value="mRNA"/>
</dbReference>
<dbReference type="PIR" id="A57076">
    <property type="entry name" value="A57076"/>
</dbReference>
<dbReference type="PIR" id="B57076">
    <property type="entry name" value="B57076"/>
</dbReference>
<dbReference type="RefSeq" id="NP_001003255.1">
    <molecule id="Q29471-2"/>
    <property type="nucleotide sequence ID" value="NM_001003255.1"/>
</dbReference>
<dbReference type="RefSeq" id="XP_005627863.1">
    <property type="nucleotide sequence ID" value="XM_005627806.1"/>
</dbReference>
<dbReference type="RefSeq" id="XP_038540456.1">
    <molecule id="Q29471-1"/>
    <property type="nucleotide sequence ID" value="XM_038684528.1"/>
</dbReference>
<dbReference type="SMR" id="Q29471"/>
<dbReference type="BioGRID" id="139851">
    <property type="interactions" value="1"/>
</dbReference>
<dbReference type="FunCoup" id="Q29471">
    <property type="interactions" value="7"/>
</dbReference>
<dbReference type="STRING" id="9615.ENSCAFP00000001437"/>
<dbReference type="PaxDb" id="9612-ENSCAFP00000001437"/>
<dbReference type="Ensembl" id="ENSCAFT00000048754.3">
    <molecule id="Q29471-1"/>
    <property type="protein sequence ID" value="ENSCAFP00000040376.2"/>
    <property type="gene ID" value="ENSCAFG00000001015.6"/>
</dbReference>
<dbReference type="Ensembl" id="ENSCAFT00030013715.1">
    <molecule id="Q29471-1"/>
    <property type="protein sequence ID" value="ENSCAFP00030011970.1"/>
    <property type="gene ID" value="ENSCAFG00030007468.1"/>
</dbReference>
<dbReference type="Ensembl" id="ENSCAFT00030013884.1">
    <molecule id="Q29471-2"/>
    <property type="protein sequence ID" value="ENSCAFP00030012120.1"/>
    <property type="gene ID" value="ENSCAFG00030007468.1"/>
</dbReference>
<dbReference type="Ensembl" id="ENSCAFT00845017793.1">
    <molecule id="Q29471-1"/>
    <property type="protein sequence ID" value="ENSCAFP00845013860.1"/>
    <property type="gene ID" value="ENSCAFG00845010107.1"/>
</dbReference>
<dbReference type="GeneID" id="403935"/>
<dbReference type="KEGG" id="cfa:403935"/>
<dbReference type="CTD" id="312"/>
<dbReference type="VEuPathDB" id="HostDB:ENSCAFG00845010107"/>
<dbReference type="eggNOG" id="KOG0819">
    <property type="taxonomic scope" value="Eukaryota"/>
</dbReference>
<dbReference type="GeneTree" id="ENSGT00940000159797"/>
<dbReference type="HOGENOM" id="CLU_025300_0_2_1"/>
<dbReference type="InParanoid" id="Q29471"/>
<dbReference type="OMA" id="LLIGKDM"/>
<dbReference type="OrthoDB" id="37886at2759"/>
<dbReference type="TreeFam" id="TF105452"/>
<dbReference type="Proteomes" id="UP000002254">
    <property type="component" value="Chromosome 13"/>
</dbReference>
<dbReference type="Proteomes" id="UP000694429">
    <property type="component" value="Chromosome 13"/>
</dbReference>
<dbReference type="Proteomes" id="UP000694542">
    <property type="component" value="Unplaced"/>
</dbReference>
<dbReference type="Proteomes" id="UP000805418">
    <property type="component" value="Chromosome 13"/>
</dbReference>
<dbReference type="Bgee" id="ENSCAFG00000001015">
    <property type="expression patterns" value="Expressed in jejunum and 39 other cell types or tissues"/>
</dbReference>
<dbReference type="GO" id="GO:0016324">
    <property type="term" value="C:apical plasma membrane"/>
    <property type="evidence" value="ECO:0000314"/>
    <property type="project" value="UniProtKB"/>
</dbReference>
<dbReference type="GO" id="GO:0016323">
    <property type="term" value="C:basolateral plasma membrane"/>
    <property type="evidence" value="ECO:0000314"/>
    <property type="project" value="UniProtKB"/>
</dbReference>
<dbReference type="GO" id="GO:0005737">
    <property type="term" value="C:cytoplasm"/>
    <property type="evidence" value="ECO:0000318"/>
    <property type="project" value="GO_Central"/>
</dbReference>
<dbReference type="GO" id="GO:0070382">
    <property type="term" value="C:exocytic vesicle"/>
    <property type="evidence" value="ECO:0000314"/>
    <property type="project" value="CAFA"/>
</dbReference>
<dbReference type="GO" id="GO:0045121">
    <property type="term" value="C:membrane raft"/>
    <property type="evidence" value="ECO:0000314"/>
    <property type="project" value="UniProtKB"/>
</dbReference>
<dbReference type="GO" id="GO:0005634">
    <property type="term" value="C:nucleus"/>
    <property type="evidence" value="ECO:0000318"/>
    <property type="project" value="GO_Central"/>
</dbReference>
<dbReference type="GO" id="GO:0005886">
    <property type="term" value="C:plasma membrane"/>
    <property type="evidence" value="ECO:0000318"/>
    <property type="project" value="GO_Central"/>
</dbReference>
<dbReference type="GO" id="GO:0012506">
    <property type="term" value="C:vesicle membrane"/>
    <property type="evidence" value="ECO:0000318"/>
    <property type="project" value="GO_Central"/>
</dbReference>
<dbReference type="GO" id="GO:0005509">
    <property type="term" value="F:calcium ion binding"/>
    <property type="evidence" value="ECO:0007669"/>
    <property type="project" value="InterPro"/>
</dbReference>
<dbReference type="GO" id="GO:0005544">
    <property type="term" value="F:calcium-dependent phospholipid binding"/>
    <property type="evidence" value="ECO:0000318"/>
    <property type="project" value="GO_Central"/>
</dbReference>
<dbReference type="GO" id="GO:0001786">
    <property type="term" value="F:phosphatidylserine binding"/>
    <property type="evidence" value="ECO:0000318"/>
    <property type="project" value="GO_Central"/>
</dbReference>
<dbReference type="GO" id="GO:0042997">
    <property type="term" value="P:negative regulation of Golgi to plasma membrane protein transport"/>
    <property type="evidence" value="ECO:0000314"/>
    <property type="project" value="UniProtKB"/>
</dbReference>
<dbReference type="GO" id="GO:0042998">
    <property type="term" value="P:positive regulation of Golgi to plasma membrane protein transport"/>
    <property type="evidence" value="ECO:0000314"/>
    <property type="project" value="UniProtKB"/>
</dbReference>
<dbReference type="FunFam" id="1.10.220.10:FF:000001">
    <property type="entry name" value="Annexin"/>
    <property type="match status" value="1"/>
</dbReference>
<dbReference type="FunFam" id="1.10.220.10:FF:000002">
    <property type="entry name" value="Annexin"/>
    <property type="match status" value="1"/>
</dbReference>
<dbReference type="FunFam" id="1.10.220.10:FF:000003">
    <property type="entry name" value="Annexin"/>
    <property type="match status" value="1"/>
</dbReference>
<dbReference type="FunFam" id="1.10.220.10:FF:000011">
    <property type="entry name" value="Annexin"/>
    <property type="match status" value="1"/>
</dbReference>
<dbReference type="Gene3D" id="1.10.220.10">
    <property type="entry name" value="Annexin"/>
    <property type="match status" value="4"/>
</dbReference>
<dbReference type="InterPro" id="IPR001464">
    <property type="entry name" value="Annexin"/>
</dbReference>
<dbReference type="InterPro" id="IPR018502">
    <property type="entry name" value="Annexin_repeat"/>
</dbReference>
<dbReference type="InterPro" id="IPR018252">
    <property type="entry name" value="Annexin_repeat_CS"/>
</dbReference>
<dbReference type="InterPro" id="IPR037104">
    <property type="entry name" value="Annexin_sf"/>
</dbReference>
<dbReference type="InterPro" id="IPR009166">
    <property type="entry name" value="ANX13"/>
</dbReference>
<dbReference type="PANTHER" id="PTHR10502">
    <property type="entry name" value="ANNEXIN"/>
    <property type="match status" value="1"/>
</dbReference>
<dbReference type="PANTHER" id="PTHR10502:SF175">
    <property type="entry name" value="ANNEXIN A13"/>
    <property type="match status" value="1"/>
</dbReference>
<dbReference type="Pfam" id="PF00191">
    <property type="entry name" value="Annexin"/>
    <property type="match status" value="4"/>
</dbReference>
<dbReference type="PRINTS" id="PR00196">
    <property type="entry name" value="ANNEXIN"/>
</dbReference>
<dbReference type="PRINTS" id="PR01811">
    <property type="entry name" value="ANNEXINXIII"/>
</dbReference>
<dbReference type="SMART" id="SM00335">
    <property type="entry name" value="ANX"/>
    <property type="match status" value="4"/>
</dbReference>
<dbReference type="SUPFAM" id="SSF47874">
    <property type="entry name" value="Annexin"/>
    <property type="match status" value="1"/>
</dbReference>
<dbReference type="PROSITE" id="PS00223">
    <property type="entry name" value="ANNEXIN_1"/>
    <property type="match status" value="3"/>
</dbReference>
<dbReference type="PROSITE" id="PS51897">
    <property type="entry name" value="ANNEXIN_2"/>
    <property type="match status" value="4"/>
</dbReference>
<comment type="function">
    <molecule>Isoform A</molecule>
    <text evidence="1">Binds to membranes enriched in phosphatidylserine or phosphatidylglycerol in a calcium-dependent manner. Half-maximal membrane binding requires about 60 uM calcium. Does not bind to membranes that lack phospholipids with an acidic headgroup.</text>
</comment>
<comment type="function">
    <molecule>Isoform B</molecule>
    <text evidence="1 7">Binds to membranes enriched in phosphatidylserine or phosphatidylglycerol in a calcium-dependent manner, but requires higher calcium levels for membrane binding than isoform A. Half-maximal membrane binding requires about 320 uM calcium (By similarity). May play a role in vesicular traffic to the apical plasma membrane (Probable).</text>
</comment>
<comment type="subunit">
    <molecule>Isoform A</molecule>
    <text evidence="1">Monomer and homodimer.</text>
</comment>
<comment type="subcellular location">
    <subcellularLocation>
        <location evidence="1">Apical cell membrane</location>
    </subcellularLocation>
    <subcellularLocation>
        <location evidence="1">Cell membrane</location>
        <topology evidence="1">Lipid-anchor</topology>
    </subcellularLocation>
    <subcellularLocation>
        <location evidence="2">Cytoplasmic vesicle</location>
    </subcellularLocation>
    <text evidence="1">Myristoylation anchors the protein to the membrane, but the protein also displays calcium-dependent, reversible binding to lipid membranes.</text>
</comment>
<comment type="subcellular location">
    <molecule>Isoform B</molecule>
    <subcellularLocation>
        <location evidence="4">Cytoplasmic vesicle</location>
    </subcellularLocation>
    <text evidence="4">Enriched in apical vesicles.</text>
</comment>
<comment type="alternative products">
    <event type="alternative splicing"/>
    <isoform>
        <id>Q29471-1</id>
        <name>A</name>
        <name>Anx13A</name>
        <sequence type="displayed"/>
    </isoform>
    <isoform>
        <id>Q29471-2</id>
        <name>B</name>
        <name>Anx13B</name>
        <sequence type="described" ref="VSP_000290"/>
    </isoform>
</comment>
<comment type="tissue specificity">
    <molecule>Isoform B</molecule>
    <text evidence="4">Detected in intestine, and at much lower levels also in kidney (at protein level).</text>
</comment>
<comment type="domain">
    <text>A pair of annexin repeats may form one binding site for calcium and phospholipid.</text>
</comment>
<comment type="similarity">
    <text evidence="3 6">Belongs to the annexin family.</text>
</comment>
<name>ANX13_CANLF</name>